<gene>
    <name type="primary">WLS</name>
    <name type="synonym">GPR177</name>
</gene>
<sequence>MAGAIIENMGTKKLCIVGGILLVFQIIAFLVGGLIAPGPTTAVSYMSVKCVDARKNHHKTKWFVPWGPNHCDKIRDIEEAIPREIEANDIVFSVHIPLPHMEMSPWFQFMLFILQLDIAFKLNNQIRENAEVSMDVSLAYRDDAFAEWTEMAHERVPRKLKCTFTSPKTPEHEGRYYECDVLPFMEIGSVAHKFYLLNIRLPVNEKKKINVGIGEIKDIRLVGIHQNGGFTKVWFAMKTFLTPSIFIIMVWYWRRITMMSRPPVLLEKVIFALGISMTFINIPVEWFSIGFDWTWMLLFGDIRQGIFYAMLLSFWIIFCGEHMMDQHERNHIAGYWKQVGPIAVGSFCLFIFDMCERGVQLTNPFYSIWTTDIGTELAMAFIIVAGICLCLYFLFLCFMVFQVFRNISGKQSSLPAMSKVRRLHYEGLIFRFKFLMLITLACAAMTVIFFIVSQVTEGHWKWGGVTVQVNSAFFTGIYGMWNLYVFALMFLYAPSHKNYGEDQSNGDLGVHSGEELQLTTTITHVDGPTEIYKLTRKEAQE</sequence>
<feature type="chain" id="PRO_0000271778" description="Protein wntless homolog">
    <location>
        <begin position="1"/>
        <end position="541"/>
    </location>
</feature>
<feature type="topological domain" description="Cytoplasmic" evidence="2">
    <location>
        <begin position="1"/>
        <end position="15"/>
    </location>
</feature>
<feature type="transmembrane region" description="Helical; Name=1" evidence="3">
    <location>
        <begin position="16"/>
        <end position="36"/>
    </location>
</feature>
<feature type="topological domain" description="Lumenal" evidence="2">
    <location>
        <begin position="37"/>
        <end position="232"/>
    </location>
</feature>
<feature type="transmembrane region" description="Helical; Name=2" evidence="3">
    <location>
        <begin position="233"/>
        <end position="253"/>
    </location>
</feature>
<feature type="topological domain" description="Cytoplasmic" evidence="2">
    <location>
        <begin position="254"/>
        <end position="268"/>
    </location>
</feature>
<feature type="transmembrane region" description="Helical; Name=3" evidence="3">
    <location>
        <begin position="269"/>
        <end position="289"/>
    </location>
</feature>
<feature type="topological domain" description="Lumenal" evidence="2">
    <location>
        <begin position="290"/>
        <end position="303"/>
    </location>
</feature>
<feature type="transmembrane region" description="Helical; Name=4" evidence="3">
    <location>
        <begin position="304"/>
        <end position="324"/>
    </location>
</feature>
<feature type="topological domain" description="Cytoplasmic" evidence="2">
    <location>
        <begin position="325"/>
        <end position="331"/>
    </location>
</feature>
<feature type="transmembrane region" description="Helical; Name=5" evidence="3">
    <location>
        <begin position="332"/>
        <end position="352"/>
    </location>
</feature>
<feature type="topological domain" description="Lumenal" evidence="2">
    <location>
        <begin position="353"/>
        <end position="380"/>
    </location>
</feature>
<feature type="transmembrane region" description="Helical; Name=6" evidence="3">
    <location>
        <begin position="381"/>
        <end position="401"/>
    </location>
</feature>
<feature type="topological domain" description="Cytoplasmic" evidence="2">
    <location>
        <begin position="402"/>
        <end position="431"/>
    </location>
</feature>
<feature type="transmembrane region" description="Helical; Name=7" evidence="3">
    <location>
        <begin position="432"/>
        <end position="452"/>
    </location>
</feature>
<feature type="topological domain" description="Lumenal" evidence="2">
    <location>
        <begin position="453"/>
        <end position="471"/>
    </location>
</feature>
<feature type="transmembrane region" description="Helical; Name=8" evidence="3">
    <location>
        <begin position="472"/>
        <end position="492"/>
    </location>
</feature>
<feature type="topological domain" description="Cytoplasmic" evidence="2">
    <location>
        <begin position="493"/>
        <end position="541"/>
    </location>
</feature>
<feature type="region of interest" description="Interaction with Wnt proteins" evidence="1">
    <location>
        <begin position="101"/>
        <end position="232"/>
    </location>
</feature>
<feature type="sequence conflict" description="In Ref. 1; CAH91878/CAH91594." evidence="4" ref="1">
    <original>G</original>
    <variation>S</variation>
    <location>
        <position position="10"/>
    </location>
</feature>
<feature type="sequence conflict" description="In Ref. 1; CAH91594." evidence="4" ref="1">
    <original>L</original>
    <variation>P</variation>
    <location>
        <position position="196"/>
    </location>
</feature>
<feature type="sequence conflict" description="In Ref. 1; CAH91878." evidence="4" ref="1">
    <original>D</original>
    <variation>Y</variation>
    <location>
        <position position="301"/>
    </location>
</feature>
<feature type="sequence conflict" description="In Ref. 1; CAH91878." evidence="4" ref="1">
    <original>I</original>
    <variation>T</variation>
    <location>
        <position position="448"/>
    </location>
</feature>
<feature type="sequence conflict" description="In Ref. 1; CAH91594." evidence="4" ref="1">
    <original>D</original>
    <variation>N</variation>
    <location>
        <position position="507"/>
    </location>
</feature>
<evidence type="ECO:0000250" key="1"/>
<evidence type="ECO:0000250" key="2">
    <source>
        <dbReference type="UniProtKB" id="Q5T9L3"/>
    </source>
</evidence>
<evidence type="ECO:0000255" key="3"/>
<evidence type="ECO:0000305" key="4"/>
<dbReference type="EMBL" id="CR859319">
    <property type="protein sequence ID" value="CAH91497.1"/>
    <property type="molecule type" value="mRNA"/>
</dbReference>
<dbReference type="EMBL" id="CR859422">
    <property type="protein sequence ID" value="CAH91594.1"/>
    <property type="molecule type" value="mRNA"/>
</dbReference>
<dbReference type="EMBL" id="CR859719">
    <property type="protein sequence ID" value="CAH91878.1"/>
    <property type="molecule type" value="mRNA"/>
</dbReference>
<dbReference type="RefSeq" id="NP_001125940.1">
    <property type="nucleotide sequence ID" value="NM_001132468.1"/>
</dbReference>
<dbReference type="SMR" id="Q5R9R3"/>
<dbReference type="FunCoup" id="Q5R9R3">
    <property type="interactions" value="1674"/>
</dbReference>
<dbReference type="STRING" id="9601.ENSPPYP00000001456"/>
<dbReference type="GeneID" id="100172874"/>
<dbReference type="KEGG" id="pon:100172874"/>
<dbReference type="CTD" id="79971"/>
<dbReference type="eggNOG" id="ENOG502QSE2">
    <property type="taxonomic scope" value="Eukaryota"/>
</dbReference>
<dbReference type="InParanoid" id="Q5R9R3"/>
<dbReference type="OrthoDB" id="5804250at2759"/>
<dbReference type="Proteomes" id="UP000001595">
    <property type="component" value="Unplaced"/>
</dbReference>
<dbReference type="GO" id="GO:0031410">
    <property type="term" value="C:cytoplasmic vesicle"/>
    <property type="evidence" value="ECO:0000250"/>
    <property type="project" value="UniProtKB"/>
</dbReference>
<dbReference type="GO" id="GO:0031901">
    <property type="term" value="C:early endosome membrane"/>
    <property type="evidence" value="ECO:0007669"/>
    <property type="project" value="UniProtKB-SubCell"/>
</dbReference>
<dbReference type="GO" id="GO:0005789">
    <property type="term" value="C:endoplasmic reticulum membrane"/>
    <property type="evidence" value="ECO:0007669"/>
    <property type="project" value="UniProtKB-SubCell"/>
</dbReference>
<dbReference type="GO" id="GO:0005794">
    <property type="term" value="C:Golgi apparatus"/>
    <property type="evidence" value="ECO:0000250"/>
    <property type="project" value="UniProtKB"/>
</dbReference>
<dbReference type="GO" id="GO:0000139">
    <property type="term" value="C:Golgi membrane"/>
    <property type="evidence" value="ECO:0007669"/>
    <property type="project" value="UniProtKB-SubCell"/>
</dbReference>
<dbReference type="GO" id="GO:0005886">
    <property type="term" value="C:plasma membrane"/>
    <property type="evidence" value="ECO:0007669"/>
    <property type="project" value="UniProtKB-SubCell"/>
</dbReference>
<dbReference type="GO" id="GO:0017147">
    <property type="term" value="F:Wnt-protein binding"/>
    <property type="evidence" value="ECO:0007669"/>
    <property type="project" value="InterPro"/>
</dbReference>
<dbReference type="GO" id="GO:0009948">
    <property type="term" value="P:anterior/posterior axis specification"/>
    <property type="evidence" value="ECO:0000250"/>
    <property type="project" value="UniProtKB"/>
</dbReference>
<dbReference type="GO" id="GO:0006886">
    <property type="term" value="P:intracellular protein transport"/>
    <property type="evidence" value="ECO:0007669"/>
    <property type="project" value="TreeGrafter"/>
</dbReference>
<dbReference type="GO" id="GO:0061355">
    <property type="term" value="P:Wnt protein secretion"/>
    <property type="evidence" value="ECO:0007669"/>
    <property type="project" value="TreeGrafter"/>
</dbReference>
<dbReference type="GO" id="GO:0016055">
    <property type="term" value="P:Wnt signaling pathway"/>
    <property type="evidence" value="ECO:0000250"/>
    <property type="project" value="UniProtKB"/>
</dbReference>
<dbReference type="InterPro" id="IPR047843">
    <property type="entry name" value="WLS-like_TM"/>
</dbReference>
<dbReference type="InterPro" id="IPR053936">
    <property type="entry name" value="WLS_GOLD"/>
</dbReference>
<dbReference type="InterPro" id="IPR009551">
    <property type="entry name" value="Wntless"/>
</dbReference>
<dbReference type="PANTHER" id="PTHR13449">
    <property type="entry name" value="INTEGRAL MEMBRANE PROTEIN GPR177"/>
    <property type="match status" value="1"/>
</dbReference>
<dbReference type="PANTHER" id="PTHR13449:SF2">
    <property type="entry name" value="PROTEIN WNTLESS HOMOLOG"/>
    <property type="match status" value="1"/>
</dbReference>
<dbReference type="Pfam" id="PF06664">
    <property type="entry name" value="WLS-like_TM"/>
    <property type="match status" value="1"/>
</dbReference>
<dbReference type="Pfam" id="PF21883">
    <property type="entry name" value="WLS_GOLD"/>
    <property type="match status" value="1"/>
</dbReference>
<reference key="1">
    <citation type="submission" date="2004-11" db="EMBL/GenBank/DDBJ databases">
        <authorList>
            <consortium name="The German cDNA consortium"/>
        </authorList>
    </citation>
    <scope>NUCLEOTIDE SEQUENCE [LARGE SCALE MRNA]</scope>
    <source>
        <tissue>Kidney</tissue>
    </source>
</reference>
<keyword id="KW-1003">Cell membrane</keyword>
<keyword id="KW-0968">Cytoplasmic vesicle</keyword>
<keyword id="KW-0217">Developmental protein</keyword>
<keyword id="KW-0256">Endoplasmic reticulum</keyword>
<keyword id="KW-0967">Endosome</keyword>
<keyword id="KW-0333">Golgi apparatus</keyword>
<keyword id="KW-0472">Membrane</keyword>
<keyword id="KW-1185">Reference proteome</keyword>
<keyword id="KW-0812">Transmembrane</keyword>
<keyword id="KW-1133">Transmembrane helix</keyword>
<keyword id="KW-0879">Wnt signaling pathway</keyword>
<organism>
    <name type="scientific">Pongo abelii</name>
    <name type="common">Sumatran orangutan</name>
    <name type="synonym">Pongo pygmaeus abelii</name>
    <dbReference type="NCBI Taxonomy" id="9601"/>
    <lineage>
        <taxon>Eukaryota</taxon>
        <taxon>Metazoa</taxon>
        <taxon>Chordata</taxon>
        <taxon>Craniata</taxon>
        <taxon>Vertebrata</taxon>
        <taxon>Euteleostomi</taxon>
        <taxon>Mammalia</taxon>
        <taxon>Eutheria</taxon>
        <taxon>Euarchontoglires</taxon>
        <taxon>Primates</taxon>
        <taxon>Haplorrhini</taxon>
        <taxon>Catarrhini</taxon>
        <taxon>Hominidae</taxon>
        <taxon>Pongo</taxon>
    </lineage>
</organism>
<proteinExistence type="evidence at transcript level"/>
<comment type="function">
    <text evidence="1">Regulates Wnt proteins sorting and secretion in a feedback regulatory mechanism. This reciprocal interaction plays a key role in the regulation of expression, subcellular location, binding and organelle-specific association of Wnt proteins. Also plays an important role in establishment of the anterior-posterior body axis formation during development (By similarity).</text>
</comment>
<comment type="subunit">
    <text evidence="1">Interacts with WNT3A. Interacts with WNT1, WNT3 and WNT5A.</text>
</comment>
<comment type="subcellular location">
    <subcellularLocation>
        <location evidence="2">Golgi apparatus membrane</location>
        <topology evidence="2">Multi-pass membrane protein</topology>
    </subcellularLocation>
    <subcellularLocation>
        <location evidence="2">Cytoplasmic vesicle membrane</location>
        <topology evidence="2">Multi-pass membrane protein</topology>
    </subcellularLocation>
    <subcellularLocation>
        <location evidence="2">Cell membrane</location>
        <topology evidence="3">Multi-pass membrane protein</topology>
    </subcellularLocation>
    <subcellularLocation>
        <location evidence="2">Endoplasmic reticulum membrane</location>
        <topology evidence="3">Multi-pass membrane protein</topology>
    </subcellularLocation>
    <subcellularLocation>
        <location evidence="2">Golgi apparatus membrane</location>
        <topology evidence="3">Multi-pass membrane protein</topology>
    </subcellularLocation>
    <subcellularLocation>
        <location evidence="2">Early endosome membrane</location>
        <topology evidence="3">Multi-pass membrane protein</topology>
    </subcellularLocation>
</comment>
<comment type="similarity">
    <text evidence="4">Belongs to the wntless family.</text>
</comment>
<protein>
    <recommendedName>
        <fullName>Protein wntless homolog</fullName>
    </recommendedName>
    <alternativeName>
        <fullName>Integral membrane protein GPR177</fullName>
    </alternativeName>
    <alternativeName>
        <fullName>Protein evenness interrupted homolog</fullName>
        <shortName>EVI</shortName>
    </alternativeName>
</protein>
<accession>Q5R9R3</accession>
<accession>Q5R8N2</accession>
<accession>Q5R9G6</accession>
<name>WLS_PONAB</name>